<gene>
    <name type="primary">TES</name>
</gene>
<sequence length="421" mass="48088">MDLETKVKKMGLGHEQGFGAPCLKCKEKCEGFELHFWRKICRNCKCGQEEHDVLLSNEEDRKVGKLFEDTKYTTLIAKLKSDGIPMYKRNVMILTNPVAAKKNVSINTVTYEWAPPVQNQALARQYMQMLPKEKQPVAGSEGAQYRKKQLAKQLPAHDQDPSKCHELSPKEVKEMQQFVKKYKNEALGVGDVKLPCEMDARGPNPMYIPGGDRSTAAAVGAMENKTAERKKTQYSCYCCKMSMKEGDPAIYAERAGYDKLWHPACFVCSTCYELLVDMIYFWKDEKLYCGRHYCDSEKPRCAGCDELIFSNEYTQAENQNWHLKHFCCFDCDYILAGEIYVMVNDKPVCKPCYVKNHAVVCQGCHNAIDPEVQRVTYNNFSWHASTECFLCSCCSKCLIGQKFMPVEGMVFCSVECKKMMS</sequence>
<name>TES_MICMU</name>
<organism>
    <name type="scientific">Microcebus murinus</name>
    <name type="common">Gray mouse lemur</name>
    <name type="synonym">Lemur murinus</name>
    <dbReference type="NCBI Taxonomy" id="30608"/>
    <lineage>
        <taxon>Eukaryota</taxon>
        <taxon>Metazoa</taxon>
        <taxon>Chordata</taxon>
        <taxon>Craniata</taxon>
        <taxon>Vertebrata</taxon>
        <taxon>Euteleostomi</taxon>
        <taxon>Mammalia</taxon>
        <taxon>Eutheria</taxon>
        <taxon>Euarchontoglires</taxon>
        <taxon>Primates</taxon>
        <taxon>Strepsirrhini</taxon>
        <taxon>Lemuriformes</taxon>
        <taxon>Cheirogaleidae</taxon>
        <taxon>Microcebus</taxon>
    </lineage>
</organism>
<feature type="chain" id="PRO_0000226347" description="Testin">
    <location>
        <begin position="1"/>
        <end position="421"/>
    </location>
</feature>
<feature type="domain" description="PET" evidence="3">
    <location>
        <begin position="92"/>
        <end position="199"/>
    </location>
</feature>
<feature type="domain" description="LIM zinc-binding 1" evidence="2">
    <location>
        <begin position="234"/>
        <end position="297"/>
    </location>
</feature>
<feature type="domain" description="LIM zinc-binding 2" evidence="2">
    <location>
        <begin position="299"/>
        <end position="359"/>
    </location>
</feature>
<feature type="domain" description="LIM zinc-binding 3" evidence="2">
    <location>
        <begin position="362"/>
        <end position="421"/>
    </location>
</feature>
<feature type="region of interest" description="Disordered" evidence="4">
    <location>
        <begin position="133"/>
        <end position="164"/>
    </location>
</feature>
<feature type="compositionally biased region" description="Basic and acidic residues" evidence="4">
    <location>
        <begin position="155"/>
        <end position="164"/>
    </location>
</feature>
<protein>
    <recommendedName>
        <fullName>Testin</fullName>
    </recommendedName>
</protein>
<keyword id="KW-0965">Cell junction</keyword>
<keyword id="KW-0963">Cytoplasm</keyword>
<keyword id="KW-0440">LIM domain</keyword>
<keyword id="KW-0479">Metal-binding</keyword>
<keyword id="KW-1185">Reference proteome</keyword>
<keyword id="KW-0677">Repeat</keyword>
<keyword id="KW-0862">Zinc</keyword>
<comment type="function">
    <text evidence="1">Scaffold protein that may play a role in cell adhesion, cell spreading and in the reorganization of the actin cytoskeleton. Plays a role in the regulation of cell proliferation. May act as a tumor suppressor (By similarity).</text>
</comment>
<comment type="subunit">
    <text evidence="1">Interacts via LIM domain 1 with ZYX. Interacts (via LIM domain 3) with ENAH and VASP. Interacts with ALKBH4, talin, actin, alpha-actinin, GRIP1 and PXN (By similarity). Interacts (via LIM domain 2) with ACTL7A (via N-terminus). Heterodimer with ACTL7A; the heterodimer interacts with ENAH to form a heterotrimer (By similarity).</text>
</comment>
<comment type="subcellular location">
    <subcellularLocation>
        <location evidence="1">Cytoplasm</location>
    </subcellularLocation>
    <subcellularLocation>
        <location evidence="1">Cell junction</location>
        <location evidence="1">Focal adhesion</location>
    </subcellularLocation>
    <text evidence="1">Detected along actin stress fibers.</text>
</comment>
<comment type="domain">
    <text evidence="1">The N-terminal and the C-terminal halves of the protein can associate with each other, thereby hindering interactions with ZYX.</text>
</comment>
<comment type="similarity">
    <text evidence="5">Belongs to the prickle / espinas / testin family.</text>
</comment>
<accession>Q2QL92</accession>
<dbReference type="EMBL" id="DP000022">
    <property type="protein sequence ID" value="ABB89817.1"/>
    <property type="molecule type" value="Genomic_DNA"/>
</dbReference>
<dbReference type="RefSeq" id="XP_012616561.1">
    <property type="nucleotide sequence ID" value="XM_012761107.2"/>
</dbReference>
<dbReference type="SMR" id="Q2QL92"/>
<dbReference type="Ensembl" id="ENSMICT00000034327.2">
    <property type="protein sequence ID" value="ENSMICP00000022490.1"/>
    <property type="gene ID" value="ENSMICG00000007002.3"/>
</dbReference>
<dbReference type="GeneID" id="105869371"/>
<dbReference type="KEGG" id="mmur:105869371"/>
<dbReference type="CTD" id="26136"/>
<dbReference type="GeneTree" id="ENSGT00940000155993"/>
<dbReference type="HOGENOM" id="CLU_008937_1_1_1"/>
<dbReference type="OrthoDB" id="10069167at2759"/>
<dbReference type="Proteomes" id="UP000694394">
    <property type="component" value="Chromosome 11"/>
</dbReference>
<dbReference type="Bgee" id="ENSMICG00000007002">
    <property type="expression patterns" value="Expressed in colon and 6 other cell types or tissues"/>
</dbReference>
<dbReference type="GO" id="GO:0005737">
    <property type="term" value="C:cytoplasm"/>
    <property type="evidence" value="ECO:0000250"/>
    <property type="project" value="UniProtKB"/>
</dbReference>
<dbReference type="GO" id="GO:0005925">
    <property type="term" value="C:focal adhesion"/>
    <property type="evidence" value="ECO:0007669"/>
    <property type="project" value="UniProtKB-SubCell"/>
</dbReference>
<dbReference type="GO" id="GO:0008270">
    <property type="term" value="F:zinc ion binding"/>
    <property type="evidence" value="ECO:0000250"/>
    <property type="project" value="UniProtKB"/>
</dbReference>
<dbReference type="GO" id="GO:0008285">
    <property type="term" value="P:negative regulation of cell population proliferation"/>
    <property type="evidence" value="ECO:0000250"/>
    <property type="project" value="UniProtKB"/>
</dbReference>
<dbReference type="CDD" id="cd09413">
    <property type="entry name" value="LIM1_Testin"/>
    <property type="match status" value="1"/>
</dbReference>
<dbReference type="CDD" id="cd09416">
    <property type="entry name" value="LIM2_Testin"/>
    <property type="match status" value="1"/>
</dbReference>
<dbReference type="CDD" id="cd09419">
    <property type="entry name" value="LIM3_Testin"/>
    <property type="match status" value="1"/>
</dbReference>
<dbReference type="CDD" id="cd09829">
    <property type="entry name" value="PET_testin"/>
    <property type="match status" value="1"/>
</dbReference>
<dbReference type="FunFam" id="2.10.110.10:FF:000061">
    <property type="entry name" value="Testin"/>
    <property type="match status" value="1"/>
</dbReference>
<dbReference type="FunFam" id="2.10.110.10:FF:000065">
    <property type="entry name" value="Testin"/>
    <property type="match status" value="1"/>
</dbReference>
<dbReference type="FunFam" id="2.10.110.10:FF:000005">
    <property type="entry name" value="Testin isoform 1"/>
    <property type="match status" value="1"/>
</dbReference>
<dbReference type="Gene3D" id="2.10.110.10">
    <property type="entry name" value="Cysteine Rich Protein"/>
    <property type="match status" value="3"/>
</dbReference>
<dbReference type="InterPro" id="IPR034958">
    <property type="entry name" value="LIM1_Testin"/>
</dbReference>
<dbReference type="InterPro" id="IPR034959">
    <property type="entry name" value="LIM2_Testin"/>
</dbReference>
<dbReference type="InterPro" id="IPR034960">
    <property type="entry name" value="LIM3_Testin"/>
</dbReference>
<dbReference type="InterPro" id="IPR010442">
    <property type="entry name" value="PET_domain"/>
</dbReference>
<dbReference type="InterPro" id="IPR033724">
    <property type="entry name" value="PET_testin"/>
</dbReference>
<dbReference type="InterPro" id="IPR047120">
    <property type="entry name" value="Pk/Esn/Tes"/>
</dbReference>
<dbReference type="InterPro" id="IPR001781">
    <property type="entry name" value="Znf_LIM"/>
</dbReference>
<dbReference type="PANTHER" id="PTHR24211">
    <property type="entry name" value="LIM DOMAIN-CONTAINING PROTEIN"/>
    <property type="match status" value="1"/>
</dbReference>
<dbReference type="PANTHER" id="PTHR24211:SF1">
    <property type="entry name" value="TESTIN"/>
    <property type="match status" value="1"/>
</dbReference>
<dbReference type="Pfam" id="PF00412">
    <property type="entry name" value="LIM"/>
    <property type="match status" value="3"/>
</dbReference>
<dbReference type="Pfam" id="PF06297">
    <property type="entry name" value="PET"/>
    <property type="match status" value="1"/>
</dbReference>
<dbReference type="SMART" id="SM00132">
    <property type="entry name" value="LIM"/>
    <property type="match status" value="3"/>
</dbReference>
<dbReference type="SUPFAM" id="SSF57716">
    <property type="entry name" value="Glucocorticoid receptor-like (DNA-binding domain)"/>
    <property type="match status" value="2"/>
</dbReference>
<dbReference type="PROSITE" id="PS00478">
    <property type="entry name" value="LIM_DOMAIN_1"/>
    <property type="match status" value="2"/>
</dbReference>
<dbReference type="PROSITE" id="PS50023">
    <property type="entry name" value="LIM_DOMAIN_2"/>
    <property type="match status" value="3"/>
</dbReference>
<dbReference type="PROSITE" id="PS51303">
    <property type="entry name" value="PET"/>
    <property type="match status" value="1"/>
</dbReference>
<proteinExistence type="inferred from homology"/>
<reference key="1">
    <citation type="submission" date="2005-11" db="EMBL/GenBank/DDBJ databases">
        <title>NISC comparative sequencing initiative.</title>
        <authorList>
            <person name="Antonellis A."/>
            <person name="Ayele K."/>
            <person name="Benjamin B."/>
            <person name="Blakesley R.W."/>
            <person name="Boakye A."/>
            <person name="Bouffard G.G."/>
            <person name="Brinkley C."/>
            <person name="Brooks S."/>
            <person name="Chu G."/>
            <person name="Coleman H."/>
            <person name="Engle J."/>
            <person name="Gestole M."/>
            <person name="Greene A."/>
            <person name="Guan X."/>
            <person name="Gupta J."/>
            <person name="Haghighi P."/>
            <person name="Han J."/>
            <person name="Hansen N."/>
            <person name="Ho S.-L."/>
            <person name="Hu P."/>
            <person name="Hunter G."/>
            <person name="Hurle B."/>
            <person name="Idol J.R."/>
            <person name="Kwong P."/>
            <person name="Laric P."/>
            <person name="Larson S."/>
            <person name="Lee-Lin S.-Q."/>
            <person name="Legaspi R."/>
            <person name="Madden M."/>
            <person name="Maduro Q.L."/>
            <person name="Maduro V.B."/>
            <person name="Margulies E.H."/>
            <person name="Masiello C."/>
            <person name="Maskeri B."/>
            <person name="McDowell J."/>
            <person name="Mojidi H.A."/>
            <person name="Mullikin J.C."/>
            <person name="Oestreicher J.S."/>
            <person name="Park M."/>
            <person name="Portnoy M.E."/>
            <person name="Prasad A."/>
            <person name="Puri O."/>
            <person name="Reddix-Dugue N."/>
            <person name="Schandler K."/>
            <person name="Schueler M.G."/>
            <person name="Sison C."/>
            <person name="Stantripop S."/>
            <person name="Stephen E."/>
            <person name="Taye A."/>
            <person name="Thomas J.W."/>
            <person name="Thomas P.J."/>
            <person name="Tsipouri V."/>
            <person name="Ung L."/>
            <person name="Vogt J.L."/>
            <person name="Wetherby K.D."/>
            <person name="Young A."/>
            <person name="Green E.D."/>
        </authorList>
    </citation>
    <scope>NUCLEOTIDE SEQUENCE [LARGE SCALE GENOMIC DNA]</scope>
</reference>
<evidence type="ECO:0000250" key="1"/>
<evidence type="ECO:0000255" key="2">
    <source>
        <dbReference type="PROSITE-ProRule" id="PRU00125"/>
    </source>
</evidence>
<evidence type="ECO:0000255" key="3">
    <source>
        <dbReference type="PROSITE-ProRule" id="PRU00636"/>
    </source>
</evidence>
<evidence type="ECO:0000256" key="4">
    <source>
        <dbReference type="SAM" id="MobiDB-lite"/>
    </source>
</evidence>
<evidence type="ECO:0000305" key="5"/>